<reference key="1">
    <citation type="journal article" date="1999" name="Hum. Mol. Genet.">
        <title>Cloning and characterization of a secreted frizzled-related protein that is expressed by the retinal pigment epithelium.</title>
        <authorList>
            <person name="Chang J.T."/>
            <person name="Esumi N."/>
            <person name="Moore K."/>
            <person name="Li Y."/>
            <person name="Zhang S."/>
            <person name="Chew C."/>
            <person name="Goodman B."/>
            <person name="Rattner A."/>
            <person name="Moody S."/>
            <person name="Stetten G."/>
            <person name="Campochiaro P.A."/>
            <person name="Zack D.J."/>
        </authorList>
    </citation>
    <scope>NUCLEOTIDE SEQUENCE [MRNA]</scope>
</reference>
<reference key="2">
    <citation type="journal article" date="2005" name="Science">
        <title>The transcriptional landscape of the mammalian genome.</title>
        <authorList>
            <person name="Carninci P."/>
            <person name="Kasukawa T."/>
            <person name="Katayama S."/>
            <person name="Gough J."/>
            <person name="Frith M.C."/>
            <person name="Maeda N."/>
            <person name="Oyama R."/>
            <person name="Ravasi T."/>
            <person name="Lenhard B."/>
            <person name="Wells C."/>
            <person name="Kodzius R."/>
            <person name="Shimokawa K."/>
            <person name="Bajic V.B."/>
            <person name="Brenner S.E."/>
            <person name="Batalov S."/>
            <person name="Forrest A.R."/>
            <person name="Zavolan M."/>
            <person name="Davis M.J."/>
            <person name="Wilming L.G."/>
            <person name="Aidinis V."/>
            <person name="Allen J.E."/>
            <person name="Ambesi-Impiombato A."/>
            <person name="Apweiler R."/>
            <person name="Aturaliya R.N."/>
            <person name="Bailey T.L."/>
            <person name="Bansal M."/>
            <person name="Baxter L."/>
            <person name="Beisel K.W."/>
            <person name="Bersano T."/>
            <person name="Bono H."/>
            <person name="Chalk A.M."/>
            <person name="Chiu K.P."/>
            <person name="Choudhary V."/>
            <person name="Christoffels A."/>
            <person name="Clutterbuck D.R."/>
            <person name="Crowe M.L."/>
            <person name="Dalla E."/>
            <person name="Dalrymple B.P."/>
            <person name="de Bono B."/>
            <person name="Della Gatta G."/>
            <person name="di Bernardo D."/>
            <person name="Down T."/>
            <person name="Engstrom P."/>
            <person name="Fagiolini M."/>
            <person name="Faulkner G."/>
            <person name="Fletcher C.F."/>
            <person name="Fukushima T."/>
            <person name="Furuno M."/>
            <person name="Futaki S."/>
            <person name="Gariboldi M."/>
            <person name="Georgii-Hemming P."/>
            <person name="Gingeras T.R."/>
            <person name="Gojobori T."/>
            <person name="Green R.E."/>
            <person name="Gustincich S."/>
            <person name="Harbers M."/>
            <person name="Hayashi Y."/>
            <person name="Hensch T.K."/>
            <person name="Hirokawa N."/>
            <person name="Hill D."/>
            <person name="Huminiecki L."/>
            <person name="Iacono M."/>
            <person name="Ikeo K."/>
            <person name="Iwama A."/>
            <person name="Ishikawa T."/>
            <person name="Jakt M."/>
            <person name="Kanapin A."/>
            <person name="Katoh M."/>
            <person name="Kawasawa Y."/>
            <person name="Kelso J."/>
            <person name="Kitamura H."/>
            <person name="Kitano H."/>
            <person name="Kollias G."/>
            <person name="Krishnan S.P."/>
            <person name="Kruger A."/>
            <person name="Kummerfeld S.K."/>
            <person name="Kurochkin I.V."/>
            <person name="Lareau L.F."/>
            <person name="Lazarevic D."/>
            <person name="Lipovich L."/>
            <person name="Liu J."/>
            <person name="Liuni S."/>
            <person name="McWilliam S."/>
            <person name="Madan Babu M."/>
            <person name="Madera M."/>
            <person name="Marchionni L."/>
            <person name="Matsuda H."/>
            <person name="Matsuzawa S."/>
            <person name="Miki H."/>
            <person name="Mignone F."/>
            <person name="Miyake S."/>
            <person name="Morris K."/>
            <person name="Mottagui-Tabar S."/>
            <person name="Mulder N."/>
            <person name="Nakano N."/>
            <person name="Nakauchi H."/>
            <person name="Ng P."/>
            <person name="Nilsson R."/>
            <person name="Nishiguchi S."/>
            <person name="Nishikawa S."/>
            <person name="Nori F."/>
            <person name="Ohara O."/>
            <person name="Okazaki Y."/>
            <person name="Orlando V."/>
            <person name="Pang K.C."/>
            <person name="Pavan W.J."/>
            <person name="Pavesi G."/>
            <person name="Pesole G."/>
            <person name="Petrovsky N."/>
            <person name="Piazza S."/>
            <person name="Reed J."/>
            <person name="Reid J.F."/>
            <person name="Ring B.Z."/>
            <person name="Ringwald M."/>
            <person name="Rost B."/>
            <person name="Ruan Y."/>
            <person name="Salzberg S.L."/>
            <person name="Sandelin A."/>
            <person name="Schneider C."/>
            <person name="Schoenbach C."/>
            <person name="Sekiguchi K."/>
            <person name="Semple C.A."/>
            <person name="Seno S."/>
            <person name="Sessa L."/>
            <person name="Sheng Y."/>
            <person name="Shibata Y."/>
            <person name="Shimada H."/>
            <person name="Shimada K."/>
            <person name="Silva D."/>
            <person name="Sinclair B."/>
            <person name="Sperling S."/>
            <person name="Stupka E."/>
            <person name="Sugiura K."/>
            <person name="Sultana R."/>
            <person name="Takenaka Y."/>
            <person name="Taki K."/>
            <person name="Tammoja K."/>
            <person name="Tan S.L."/>
            <person name="Tang S."/>
            <person name="Taylor M.S."/>
            <person name="Tegner J."/>
            <person name="Teichmann S.A."/>
            <person name="Ueda H.R."/>
            <person name="van Nimwegen E."/>
            <person name="Verardo R."/>
            <person name="Wei C.L."/>
            <person name="Yagi K."/>
            <person name="Yamanishi H."/>
            <person name="Zabarovsky E."/>
            <person name="Zhu S."/>
            <person name="Zimmer A."/>
            <person name="Hide W."/>
            <person name="Bult C."/>
            <person name="Grimmond S.M."/>
            <person name="Teasdale R.D."/>
            <person name="Liu E.T."/>
            <person name="Brusic V."/>
            <person name="Quackenbush J."/>
            <person name="Wahlestedt C."/>
            <person name="Mattick J.S."/>
            <person name="Hume D.A."/>
            <person name="Kai C."/>
            <person name="Sasaki D."/>
            <person name="Tomaru Y."/>
            <person name="Fukuda S."/>
            <person name="Kanamori-Katayama M."/>
            <person name="Suzuki M."/>
            <person name="Aoki J."/>
            <person name="Arakawa T."/>
            <person name="Iida J."/>
            <person name="Imamura K."/>
            <person name="Itoh M."/>
            <person name="Kato T."/>
            <person name="Kawaji H."/>
            <person name="Kawagashira N."/>
            <person name="Kawashima T."/>
            <person name="Kojima M."/>
            <person name="Kondo S."/>
            <person name="Konno H."/>
            <person name="Nakano K."/>
            <person name="Ninomiya N."/>
            <person name="Nishio T."/>
            <person name="Okada M."/>
            <person name="Plessy C."/>
            <person name="Shibata K."/>
            <person name="Shiraki T."/>
            <person name="Suzuki S."/>
            <person name="Tagami M."/>
            <person name="Waki K."/>
            <person name="Watahiki A."/>
            <person name="Okamura-Oho Y."/>
            <person name="Suzuki H."/>
            <person name="Kawai J."/>
            <person name="Hayashizaki Y."/>
        </authorList>
    </citation>
    <scope>NUCLEOTIDE SEQUENCE [LARGE SCALE MRNA]</scope>
    <source>
        <strain>C57BL/6J</strain>
        <tissue>Retina</tissue>
    </source>
</reference>
<reference key="3">
    <citation type="journal article" date="2004" name="Genome Res.">
        <title>The status, quality, and expansion of the NIH full-length cDNA project: the Mammalian Gene Collection (MGC).</title>
        <authorList>
            <consortium name="The MGC Project Team"/>
        </authorList>
    </citation>
    <scope>NUCLEOTIDE SEQUENCE [LARGE SCALE MRNA]</scope>
    <source>
        <strain>C57BL/6J</strain>
        <tissue>Mammary gland</tissue>
    </source>
</reference>
<reference key="4">
    <citation type="journal article" date="1997" name="Proc. Natl. Acad. Sci. U.S.A.">
        <title>A family of secreted proteins contains homology to the cysteine-rich ligand-binding domain of frizzled receptors.</title>
        <authorList>
            <person name="Rattner A."/>
            <person name="Hsieh J.-C."/>
            <person name="Smallwood P.M."/>
            <person name="Gilbert D.J."/>
            <person name="Copeland N.G."/>
            <person name="Jenkins N.A."/>
            <person name="Nathans J."/>
        </authorList>
    </citation>
    <scope>NUCLEOTIDE SEQUENCE [MRNA] OF 1-161</scope>
    <source>
        <strain>C57BL/6J</strain>
        <tissue>Embryonic eye</tissue>
    </source>
</reference>
<reference key="5">
    <citation type="journal article" date="2001" name="Biochem. Biophys. Res. Commun.">
        <title>Transcriptional activity of the promoter region of rat frizzled-related protein gene.</title>
        <authorList>
            <person name="Yam J.W.P."/>
            <person name="Chan K.W."/>
            <person name="Wong V.K.W."/>
            <person name="Hsiao W.L.W."/>
        </authorList>
    </citation>
    <scope>NUCLEOTIDE SEQUENCE [MRNA] OF 1-148</scope>
    <source>
        <strain>129/SvCp</strain>
    </source>
</reference>
<reference key="6">
    <citation type="journal article" date="1998" name="Mech. Dev.">
        <title>Developmental expression patterns of mouse sFRP genes encoding members of the secreted frizzled related protein family.</title>
        <authorList>
            <person name="Leimeister C."/>
            <person name="Bach A."/>
            <person name="Gessler M."/>
        </authorList>
    </citation>
    <scope>DEVELOPMENTAL STAGE</scope>
</reference>
<reference key="7">
    <citation type="journal article" date="2003" name="Endocrinology">
        <title>Expression and localization of secreted frizzled-related protein-4 in the rodent ovary: evidence for selective up-regulation in luteinized granulosa cells.</title>
        <authorList>
            <person name="Hsieh M."/>
            <person name="Mulders S.M."/>
            <person name="Friis R.R."/>
            <person name="Dharmarajan A."/>
            <person name="Richards J.S."/>
        </authorList>
    </citation>
    <scope>TISSUE SPECIFICITY</scope>
    <scope>INDUCTION</scope>
</reference>
<reference key="8">
    <citation type="journal article" date="2016" name="N. Engl. J. Med.">
        <title>Cortical-Bone Fragility--Insights from sFRP4 Deficiency in Pyle's Disease.</title>
        <authorList>
            <person name="Simsek Kiper P.O."/>
            <person name="Saito H."/>
            <person name="Gori F."/>
            <person name="Unger S."/>
            <person name="Hesse E."/>
            <person name="Yamana K."/>
            <person name="Kiviranta R."/>
            <person name="Solban N."/>
            <person name="Liu J."/>
            <person name="Brommage R."/>
            <person name="Boduroglu K."/>
            <person name="Bonafe L."/>
            <person name="Campos-Xavier B."/>
            <person name="Dikoglu E."/>
            <person name="Eastell R."/>
            <person name="Gossiel F."/>
            <person name="Harshman K."/>
            <person name="Nishimura G."/>
            <person name="Girisha K.M."/>
            <person name="Stevenson B.J."/>
            <person name="Takita H."/>
            <person name="Rivolta C."/>
            <person name="Superti-Furga A."/>
            <person name="Baron R."/>
        </authorList>
    </citation>
    <scope>FUNCTION</scope>
    <scope>DISRUPTION PHENOTYPE</scope>
</reference>
<name>SFRP4_MOUSE</name>
<keyword id="KW-0217">Developmental protein</keyword>
<keyword id="KW-0221">Differentiation</keyword>
<keyword id="KW-1015">Disulfide bond</keyword>
<keyword id="KW-0325">Glycoprotein</keyword>
<keyword id="KW-1185">Reference proteome</keyword>
<keyword id="KW-0964">Secreted</keyword>
<keyword id="KW-0732">Signal</keyword>
<keyword id="KW-0879">Wnt signaling pathway</keyword>
<comment type="function">
    <text evidence="2 3 9">Soluble frizzled-related proteins (sFRPS) function as modulators of Wnt signaling through direct interaction with Wnts. They have a role in regulating cell growth and differentiation in specific cell types (PubMed:27355534). SFRP4 plays a role in bone morphogenesis (PubMed:27355534). May also act as a regulator of adult uterine morphology and function. May also increase apoptosis during ovulation possibly through modulation of FZ1/FZ4/WNT4 signaling (By similarity). Has phosphaturic effects by specifically inhibiting sodium-dependent phosphate uptake (By similarity).</text>
</comment>
<comment type="subcellular location">
    <subcellularLocation>
        <location evidence="2">Secreted</location>
    </subcellularLocation>
</comment>
<comment type="tissue specificity">
    <text evidence="8">Expressed in the ovary. Localized to granulosa cells of periovulatory follicles and corpora lutea. Weakly expressed in adult tissues including kidney, brain and lung.</text>
</comment>
<comment type="developmental stage">
    <text evidence="10">Only weakly expressed in developing embryo except for developing teeth, eye and salivary gland. In the developing eye, from 12.5 dpc, expressed in the future neural retina, in both the inner and outer cell layers. In the developing teeth, strong expression detected in the developing incisor teeth at 14.5 dpc. Expression localized to the mesenchyme of the dental follicle surrounding the enamel organ only at the early cap stage. Highly expressed in the branching epithelium of the salivary gland.</text>
</comment>
<comment type="induction">
    <text evidence="8">Induced in ovaries by chorionic gonadotropin (CG).</text>
</comment>
<comment type="domain">
    <text evidence="1">The FZ domain is involved in binding with Wnt ligands.</text>
</comment>
<comment type="disruption phenotype">
    <text evidence="9">Mice laking Sfrp4 have increased trabecular bone, reduced cortical-bone thickness, and failure of bone modeling during growth, resulting in wider bones with thinner and mechanically inadequate cortexes.</text>
</comment>
<comment type="similarity">
    <text evidence="11">Belongs to the secreted frizzled-related protein (sFRP) family.</text>
</comment>
<evidence type="ECO:0000250" key="1"/>
<evidence type="ECO:0000250" key="2">
    <source>
        <dbReference type="UniProtKB" id="Q6FHJ7"/>
    </source>
</evidence>
<evidence type="ECO:0000250" key="3">
    <source>
        <dbReference type="UniProtKB" id="Q9JLS4"/>
    </source>
</evidence>
<evidence type="ECO:0000255" key="4"/>
<evidence type="ECO:0000255" key="5">
    <source>
        <dbReference type="PROSITE-ProRule" id="PRU00090"/>
    </source>
</evidence>
<evidence type="ECO:0000255" key="6">
    <source>
        <dbReference type="PROSITE-ProRule" id="PRU00295"/>
    </source>
</evidence>
<evidence type="ECO:0000256" key="7">
    <source>
        <dbReference type="SAM" id="MobiDB-lite"/>
    </source>
</evidence>
<evidence type="ECO:0000269" key="8">
    <source>
    </source>
</evidence>
<evidence type="ECO:0000269" key="9">
    <source>
    </source>
</evidence>
<evidence type="ECO:0000269" key="10">
    <source>
    </source>
</evidence>
<evidence type="ECO:0000305" key="11"/>
<gene>
    <name type="primary">Sfrp4</name>
</gene>
<organism>
    <name type="scientific">Mus musculus</name>
    <name type="common">Mouse</name>
    <dbReference type="NCBI Taxonomy" id="10090"/>
    <lineage>
        <taxon>Eukaryota</taxon>
        <taxon>Metazoa</taxon>
        <taxon>Chordata</taxon>
        <taxon>Craniata</taxon>
        <taxon>Vertebrata</taxon>
        <taxon>Euteleostomi</taxon>
        <taxon>Mammalia</taxon>
        <taxon>Eutheria</taxon>
        <taxon>Euarchontoglires</taxon>
        <taxon>Glires</taxon>
        <taxon>Rodentia</taxon>
        <taxon>Myomorpha</taxon>
        <taxon>Muroidea</taxon>
        <taxon>Muridae</taxon>
        <taxon>Murinae</taxon>
        <taxon>Mus</taxon>
        <taxon>Mus</taxon>
    </lineage>
</organism>
<proteinExistence type="evidence at transcript level"/>
<protein>
    <recommendedName>
        <fullName>Secreted frizzled-related sequence protein 4</fullName>
        <shortName>FRP-4</shortName>
        <shortName>sFRP-4</shortName>
    </recommendedName>
</protein>
<dbReference type="EMBL" id="AF117709">
    <property type="protein sequence ID" value="AAD12306.1"/>
    <property type="molecule type" value="mRNA"/>
</dbReference>
<dbReference type="EMBL" id="AK080766">
    <property type="protein sequence ID" value="BAC38013.1"/>
    <property type="molecule type" value="mRNA"/>
</dbReference>
<dbReference type="EMBL" id="BC034853">
    <property type="protein sequence ID" value="AAH34853.1"/>
    <property type="molecule type" value="mRNA"/>
</dbReference>
<dbReference type="EMBL" id="U88569">
    <property type="status" value="NOT_ANNOTATED_CDS"/>
    <property type="molecule type" value="Genomic_DNA"/>
</dbReference>
<dbReference type="EMBL" id="AF364906">
    <property type="protein sequence ID" value="AAL14904.1"/>
    <property type="molecule type" value="Genomic_DNA"/>
</dbReference>
<dbReference type="CCDS" id="CCDS26261.1"/>
<dbReference type="RefSeq" id="NP_057896.1">
    <property type="nucleotide sequence ID" value="NM_016687.4"/>
</dbReference>
<dbReference type="SMR" id="Q9Z1N6"/>
<dbReference type="BioGRID" id="203187">
    <property type="interactions" value="2"/>
</dbReference>
<dbReference type="FunCoup" id="Q9Z1N6">
    <property type="interactions" value="362"/>
</dbReference>
<dbReference type="STRING" id="10090.ENSMUSP00000002883"/>
<dbReference type="GlyCosmos" id="Q9Z1N6">
    <property type="glycosylation" value="5 sites, No reported glycans"/>
</dbReference>
<dbReference type="GlyGen" id="Q9Z1N6">
    <property type="glycosylation" value="5 sites, 3 N-linked glycans (3 sites)"/>
</dbReference>
<dbReference type="iPTMnet" id="Q9Z1N6"/>
<dbReference type="PhosphoSitePlus" id="Q9Z1N6"/>
<dbReference type="PaxDb" id="10090-ENSMUSP00000002883"/>
<dbReference type="ProteomicsDB" id="256973"/>
<dbReference type="Antibodypedia" id="1568">
    <property type="antibodies" value="391 antibodies from 40 providers"/>
</dbReference>
<dbReference type="DNASU" id="20379"/>
<dbReference type="Ensembl" id="ENSMUST00000002883.7">
    <property type="protein sequence ID" value="ENSMUSP00000002883.6"/>
    <property type="gene ID" value="ENSMUSG00000021319.8"/>
</dbReference>
<dbReference type="GeneID" id="20379"/>
<dbReference type="KEGG" id="mmu:20379"/>
<dbReference type="UCSC" id="uc007ppg.2">
    <property type="organism name" value="mouse"/>
</dbReference>
<dbReference type="AGR" id="MGI:892010"/>
<dbReference type="CTD" id="6424"/>
<dbReference type="MGI" id="MGI:892010">
    <property type="gene designation" value="Sfrp4"/>
</dbReference>
<dbReference type="VEuPathDB" id="HostDB:ENSMUSG00000021319"/>
<dbReference type="eggNOG" id="KOG3577">
    <property type="taxonomic scope" value="Eukaryota"/>
</dbReference>
<dbReference type="GeneTree" id="ENSGT00940000160766"/>
<dbReference type="HOGENOM" id="CLU_058446_0_0_1"/>
<dbReference type="InParanoid" id="Q9Z1N6"/>
<dbReference type="OMA" id="CRAMPWN"/>
<dbReference type="OrthoDB" id="40142at9989"/>
<dbReference type="PhylomeDB" id="Q9Z1N6"/>
<dbReference type="BioGRID-ORCS" id="20379">
    <property type="hits" value="2 hits in 79 CRISPR screens"/>
</dbReference>
<dbReference type="ChiTaRS" id="Sfrp4">
    <property type="organism name" value="mouse"/>
</dbReference>
<dbReference type="PRO" id="PR:Q9Z1N6"/>
<dbReference type="Proteomes" id="UP000000589">
    <property type="component" value="Chromosome 13"/>
</dbReference>
<dbReference type="RNAct" id="Q9Z1N6">
    <property type="molecule type" value="protein"/>
</dbReference>
<dbReference type="Bgee" id="ENSMUSG00000021319">
    <property type="expression patterns" value="Expressed in gastrula and 134 other cell types or tissues"/>
</dbReference>
<dbReference type="ExpressionAtlas" id="Q9Z1N6">
    <property type="expression patterns" value="baseline and differential"/>
</dbReference>
<dbReference type="GO" id="GO:0009986">
    <property type="term" value="C:cell surface"/>
    <property type="evidence" value="ECO:0007669"/>
    <property type="project" value="Ensembl"/>
</dbReference>
<dbReference type="GO" id="GO:0005737">
    <property type="term" value="C:cytoplasm"/>
    <property type="evidence" value="ECO:0007669"/>
    <property type="project" value="Ensembl"/>
</dbReference>
<dbReference type="GO" id="GO:0005615">
    <property type="term" value="C:extracellular space"/>
    <property type="evidence" value="ECO:0007669"/>
    <property type="project" value="Ensembl"/>
</dbReference>
<dbReference type="GO" id="GO:0005634">
    <property type="term" value="C:nucleus"/>
    <property type="evidence" value="ECO:0007669"/>
    <property type="project" value="Ensembl"/>
</dbReference>
<dbReference type="GO" id="GO:0017147">
    <property type="term" value="F:Wnt-protein binding"/>
    <property type="evidence" value="ECO:0000266"/>
    <property type="project" value="MGI"/>
</dbReference>
<dbReference type="GO" id="GO:0060349">
    <property type="term" value="P:bone morphogenesis"/>
    <property type="evidence" value="ECO:0000315"/>
    <property type="project" value="UniProtKB"/>
</dbReference>
<dbReference type="GO" id="GO:0030154">
    <property type="term" value="P:cell differentiation"/>
    <property type="evidence" value="ECO:0007669"/>
    <property type="project" value="UniProtKB-KW"/>
</dbReference>
<dbReference type="GO" id="GO:0090090">
    <property type="term" value="P:negative regulation of canonical Wnt signaling pathway"/>
    <property type="evidence" value="ECO:0000315"/>
    <property type="project" value="UniProtKB"/>
</dbReference>
<dbReference type="GO" id="GO:0008285">
    <property type="term" value="P:negative regulation of cell population proliferation"/>
    <property type="evidence" value="ECO:0007669"/>
    <property type="project" value="Ensembl"/>
</dbReference>
<dbReference type="GO" id="GO:2000051">
    <property type="term" value="P:negative regulation of non-canonical Wnt signaling pathway"/>
    <property type="evidence" value="ECO:0000315"/>
    <property type="project" value="UniProtKB"/>
</dbReference>
<dbReference type="GO" id="GO:2000119">
    <property type="term" value="P:negative regulation of sodium-dependent phosphate transport"/>
    <property type="evidence" value="ECO:0007669"/>
    <property type="project" value="Ensembl"/>
</dbReference>
<dbReference type="GO" id="GO:0055062">
    <property type="term" value="P:phosphate ion homeostasis"/>
    <property type="evidence" value="ECO:0007669"/>
    <property type="project" value="Ensembl"/>
</dbReference>
<dbReference type="GO" id="GO:0090263">
    <property type="term" value="P:positive regulation of canonical Wnt signaling pathway"/>
    <property type="evidence" value="ECO:0000266"/>
    <property type="project" value="MGI"/>
</dbReference>
<dbReference type="GO" id="GO:0045606">
    <property type="term" value="P:positive regulation of epidermal cell differentiation"/>
    <property type="evidence" value="ECO:0007669"/>
    <property type="project" value="Ensembl"/>
</dbReference>
<dbReference type="GO" id="GO:0010628">
    <property type="term" value="P:positive regulation of gene expression"/>
    <property type="evidence" value="ECO:0007669"/>
    <property type="project" value="Ensembl"/>
</dbReference>
<dbReference type="GO" id="GO:1902174">
    <property type="term" value="P:positive regulation of keratinocyte apoptotic process"/>
    <property type="evidence" value="ECO:0007669"/>
    <property type="project" value="Ensembl"/>
</dbReference>
<dbReference type="GO" id="GO:0002092">
    <property type="term" value="P:positive regulation of receptor internalization"/>
    <property type="evidence" value="ECO:0007669"/>
    <property type="project" value="Ensembl"/>
</dbReference>
<dbReference type="GO" id="GO:0030510">
    <property type="term" value="P:regulation of BMP signaling pathway"/>
    <property type="evidence" value="ECO:0000315"/>
    <property type="project" value="UniProtKB"/>
</dbReference>
<dbReference type="GO" id="GO:0016055">
    <property type="term" value="P:Wnt signaling pathway"/>
    <property type="evidence" value="ECO:0007669"/>
    <property type="project" value="UniProtKB-KW"/>
</dbReference>
<dbReference type="FunFam" id="1.10.2000.10:FF:000005">
    <property type="entry name" value="secreted frizzled-related protein 4"/>
    <property type="match status" value="1"/>
</dbReference>
<dbReference type="FunFam" id="2.40.50.120:FF:000011">
    <property type="entry name" value="Secreted frizzled-related sequence protein 4"/>
    <property type="match status" value="1"/>
</dbReference>
<dbReference type="Gene3D" id="2.40.50.120">
    <property type="match status" value="1"/>
</dbReference>
<dbReference type="Gene3D" id="1.10.2000.10">
    <property type="entry name" value="Frizzled cysteine-rich domain"/>
    <property type="match status" value="1"/>
</dbReference>
<dbReference type="InterPro" id="IPR015526">
    <property type="entry name" value="Frizzled/SFRP"/>
</dbReference>
<dbReference type="InterPro" id="IPR020067">
    <property type="entry name" value="Frizzled_dom"/>
</dbReference>
<dbReference type="InterPro" id="IPR036790">
    <property type="entry name" value="Frizzled_dom_sf"/>
</dbReference>
<dbReference type="InterPro" id="IPR001134">
    <property type="entry name" value="Netrin_domain"/>
</dbReference>
<dbReference type="InterPro" id="IPR018933">
    <property type="entry name" value="Netrin_module_non-TIMP"/>
</dbReference>
<dbReference type="InterPro" id="IPR008993">
    <property type="entry name" value="TIMP-like_OB-fold"/>
</dbReference>
<dbReference type="PANTHER" id="PTHR11309">
    <property type="entry name" value="FRIZZLED"/>
    <property type="match status" value="1"/>
</dbReference>
<dbReference type="PANTHER" id="PTHR11309:SF7">
    <property type="entry name" value="SECRETED FRIZZLED-RELATED PROTEIN 4"/>
    <property type="match status" value="1"/>
</dbReference>
<dbReference type="Pfam" id="PF01392">
    <property type="entry name" value="Fz"/>
    <property type="match status" value="1"/>
</dbReference>
<dbReference type="Pfam" id="PF01759">
    <property type="entry name" value="NTR"/>
    <property type="match status" value="1"/>
</dbReference>
<dbReference type="SMART" id="SM00643">
    <property type="entry name" value="C345C"/>
    <property type="match status" value="1"/>
</dbReference>
<dbReference type="SMART" id="SM00063">
    <property type="entry name" value="FRI"/>
    <property type="match status" value="1"/>
</dbReference>
<dbReference type="SUPFAM" id="SSF63501">
    <property type="entry name" value="Frizzled cysteine-rich domain"/>
    <property type="match status" value="1"/>
</dbReference>
<dbReference type="SUPFAM" id="SSF50242">
    <property type="entry name" value="TIMP-like"/>
    <property type="match status" value="1"/>
</dbReference>
<dbReference type="PROSITE" id="PS50038">
    <property type="entry name" value="FZ"/>
    <property type="match status" value="1"/>
</dbReference>
<dbReference type="PROSITE" id="PS50189">
    <property type="entry name" value="NTR"/>
    <property type="match status" value="1"/>
</dbReference>
<accession>Q9Z1N6</accession>
<accession>Q91ZX9</accession>
<sequence length="351" mass="40342">MLRSILVALCLWLRLALGVRGAPCEAVRIPMCRHMPWNITRMPNHLHHSTQENAILAIEQYEELVDVNCSSVLRFFLCAMYAPICTLEFLHDPIKPCKSVCQRARDDCEPLMKMYNHSWPESLACDELPVYDRGVCISPEAIVTDLPEDVKWIDITPDMMVQERSFDADCKRLSPDRCKCKKVKPTLATYLSKNYSYVIHAKIKAVQRSGCNEVTTVVDVKEIFKSLSPIPRTQVPLITNSSCQCPHILPHQDVLIMCYEWRSRMMLLENCLVEKWRDQLSRRSIQWEERLQEQQRTIQDKKQIASRTSRTSRSNPPKSKGRPPAPKPASPKKNIKARSAPKKSNLKKSAS</sequence>
<feature type="signal peptide" evidence="4">
    <location>
        <begin position="1"/>
        <end position="18"/>
    </location>
</feature>
<feature type="chain" id="PRO_0000032552" description="Secreted frizzled-related sequence protein 4">
    <location>
        <begin position="19"/>
        <end position="351"/>
    </location>
</feature>
<feature type="domain" description="FZ" evidence="5">
    <location>
        <begin position="19"/>
        <end position="139"/>
    </location>
</feature>
<feature type="domain" description="NTR" evidence="6">
    <location>
        <begin position="178"/>
        <end position="306"/>
    </location>
</feature>
<feature type="region of interest" description="Disordered" evidence="7">
    <location>
        <begin position="293"/>
        <end position="351"/>
    </location>
</feature>
<feature type="compositionally biased region" description="Basic and acidic residues" evidence="7">
    <location>
        <begin position="293"/>
        <end position="303"/>
    </location>
</feature>
<feature type="compositionally biased region" description="Low complexity" evidence="7">
    <location>
        <begin position="306"/>
        <end position="318"/>
    </location>
</feature>
<feature type="compositionally biased region" description="Basic residues" evidence="7">
    <location>
        <begin position="333"/>
        <end position="351"/>
    </location>
</feature>
<feature type="glycosylation site" description="N-linked (GlcNAc...) asparagine" evidence="4">
    <location>
        <position position="38"/>
    </location>
</feature>
<feature type="glycosylation site" description="N-linked (GlcNAc...) asparagine" evidence="4">
    <location>
        <position position="68"/>
    </location>
</feature>
<feature type="glycosylation site" description="N-linked (GlcNAc...) asparagine" evidence="4">
    <location>
        <position position="116"/>
    </location>
</feature>
<feature type="glycosylation site" description="N-linked (GlcNAc...) asparagine" evidence="4">
    <location>
        <position position="194"/>
    </location>
</feature>
<feature type="glycosylation site" description="N-linked (GlcNAc...) asparagine" evidence="4">
    <location>
        <position position="240"/>
    </location>
</feature>
<feature type="disulfide bond" evidence="1">
    <location>
        <begin position="24"/>
        <end position="85"/>
    </location>
</feature>
<feature type="disulfide bond" evidence="1">
    <location>
        <begin position="32"/>
        <end position="78"/>
    </location>
</feature>
<feature type="disulfide bond" evidence="1">
    <location>
        <begin position="69"/>
        <end position="108"/>
    </location>
</feature>
<feature type="disulfide bond" evidence="1">
    <location>
        <begin position="97"/>
        <end position="136"/>
    </location>
</feature>
<feature type="disulfide bond" evidence="1">
    <location>
        <begin position="101"/>
        <end position="125"/>
    </location>
</feature>
<feature type="sequence conflict" description="In Ref. 4." evidence="11" ref="4">
    <original>S</original>
    <variation>F</variation>
    <location>
        <position position="99"/>
    </location>
</feature>